<keyword id="KW-1003">Cell membrane</keyword>
<keyword id="KW-0449">Lipoprotein</keyword>
<keyword id="KW-0472">Membrane</keyword>
<keyword id="KW-0564">Palmitate</keyword>
<keyword id="KW-1185">Reference proteome</keyword>
<keyword id="KW-0732">Signal</keyword>
<evidence type="ECO:0000255" key="1">
    <source>
        <dbReference type="PROSITE-ProRule" id="PRU00303"/>
    </source>
</evidence>
<evidence type="ECO:0000256" key="2">
    <source>
        <dbReference type="SAM" id="MobiDB-lite"/>
    </source>
</evidence>
<evidence type="ECO:0000305" key="3"/>
<proteinExistence type="inferred from homology"/>
<reference key="1">
    <citation type="journal article" date="1996" name="Nucleic Acids Res.">
        <title>Complete sequence analysis of the genome of the bacterium Mycoplasma pneumoniae.</title>
        <authorList>
            <person name="Himmelreich R."/>
            <person name="Hilbert H."/>
            <person name="Plagens H."/>
            <person name="Pirkl E."/>
            <person name="Li B.-C."/>
            <person name="Herrmann R."/>
        </authorList>
    </citation>
    <scope>NUCLEOTIDE SEQUENCE [LARGE SCALE GENOMIC DNA]</scope>
    <source>
        <strain>ATCC 29342 / M129 / Subtype 1</strain>
    </source>
</reference>
<dbReference type="EMBL" id="U00089">
    <property type="protein sequence ID" value="AAB95705.1"/>
    <property type="molecule type" value="Genomic_DNA"/>
</dbReference>
<dbReference type="PIR" id="S73383">
    <property type="entry name" value="S73383"/>
</dbReference>
<dbReference type="RefSeq" id="WP_010874454.1">
    <property type="nucleotide sequence ID" value="NZ_OU342337.1"/>
</dbReference>
<dbReference type="IntAct" id="P75595">
    <property type="interactions" value="2"/>
</dbReference>
<dbReference type="STRING" id="272634.MPN_097"/>
<dbReference type="EnsemblBacteria" id="AAB95705">
    <property type="protein sequence ID" value="AAB95705"/>
    <property type="gene ID" value="MPN_097"/>
</dbReference>
<dbReference type="KEGG" id="mpn:MPN_097"/>
<dbReference type="HOGENOM" id="CLU_017227_0_0_14"/>
<dbReference type="Proteomes" id="UP000000808">
    <property type="component" value="Chromosome"/>
</dbReference>
<dbReference type="GO" id="GO:0005886">
    <property type="term" value="C:plasma membrane"/>
    <property type="evidence" value="ECO:0007669"/>
    <property type="project" value="UniProtKB-SubCell"/>
</dbReference>
<dbReference type="InterPro" id="IPR004984">
    <property type="entry name" value="Mycoplasma_lipoprotein_cen_dom"/>
</dbReference>
<dbReference type="Pfam" id="PF03305">
    <property type="entry name" value="Lipoprotein_X"/>
    <property type="match status" value="1"/>
</dbReference>
<dbReference type="PROSITE" id="PS51257">
    <property type="entry name" value="PROKAR_LIPOPROTEIN"/>
    <property type="match status" value="1"/>
</dbReference>
<name>Y097_MYCPN</name>
<protein>
    <recommendedName>
        <fullName>Uncharacterized lipoprotein MPN_097</fullName>
    </recommendedName>
</protein>
<accession>P75595</accession>
<sequence length="541" mass="59153">MQFKYGALIFSGFLGLSIVLASCGARGKFDQVDDGKIKLASSLTSRSASAALQKVVEKYNKVKGVNDYPIEITQIAGGYDGGRTDLQTRVSVKDKTSFYNMILNYPDLVSVLARNGMELPFDGVNVDKLSPNFLKFNERISGVAKKANYAIPISMSTDILILNAPVLHYILNSAKKNDGNTKVQVKAQSKDSQTKVKGTMEIGTDESTKNLWSDIQKKAGENGKATTEGTKKAAAKSTHLTLLTKSEQSTQGNNGASESDKKIEETWGTYSEVDGGLKNYTFKADVFDTWHGLIDFSTRVAKSFKNKVSDISTKKGTDIQGVLGLDSTPNALFTSVFAAGDSNFDNFFYKVKDGRADFSNFNENGTSYKNLEKVFNDYKKLTDSNGLFVNKGGSYTSNFQKFHQLAYSISSSSGYAYAFAGENSKRLKFNDDTFIEYPSFTQEIHAPGQSSQKEGGQQQSNSKDNGNLLGTFTIEAAKSKTKTEVKKTEDTQNQGKKAEGTPNQGKKAEGTENQGKTIFLYKTSIPNDKQDGVDAVLIKDK</sequence>
<gene>
    <name type="ordered locus">MPN_097</name>
    <name type="ORF">MP057</name>
    <name type="ORF">R02_orf541</name>
</gene>
<organism>
    <name type="scientific">Mycoplasma pneumoniae (strain ATCC 29342 / M129 / Subtype 1)</name>
    <name type="common">Mycoplasmoides pneumoniae</name>
    <dbReference type="NCBI Taxonomy" id="272634"/>
    <lineage>
        <taxon>Bacteria</taxon>
        <taxon>Bacillati</taxon>
        <taxon>Mycoplasmatota</taxon>
        <taxon>Mycoplasmoidales</taxon>
        <taxon>Mycoplasmoidaceae</taxon>
        <taxon>Mycoplasmoides</taxon>
    </lineage>
</organism>
<comment type="subcellular location">
    <subcellularLocation>
        <location evidence="1">Cell membrane</location>
        <topology evidence="1">Lipid-anchor</topology>
    </subcellularLocation>
</comment>
<comment type="similarity">
    <text evidence="3">Belongs to the MG185/MG260 family.</text>
</comment>
<feature type="signal peptide" evidence="1">
    <location>
        <begin position="1"/>
        <end position="22"/>
    </location>
</feature>
<feature type="chain" id="PRO_0000018725" description="Uncharacterized lipoprotein MPN_097">
    <location>
        <begin position="23"/>
        <end position="541"/>
    </location>
</feature>
<feature type="region of interest" description="Disordered" evidence="2">
    <location>
        <begin position="446"/>
        <end position="468"/>
    </location>
</feature>
<feature type="region of interest" description="Disordered" evidence="2">
    <location>
        <begin position="480"/>
        <end position="514"/>
    </location>
</feature>
<feature type="compositionally biased region" description="Low complexity" evidence="2">
    <location>
        <begin position="448"/>
        <end position="460"/>
    </location>
</feature>
<feature type="compositionally biased region" description="Basic and acidic residues" evidence="2">
    <location>
        <begin position="480"/>
        <end position="490"/>
    </location>
</feature>
<feature type="lipid moiety-binding region" description="N-palmitoyl cysteine" evidence="1">
    <location>
        <position position="23"/>
    </location>
</feature>
<feature type="lipid moiety-binding region" description="S-diacylglycerol cysteine" evidence="1">
    <location>
        <position position="23"/>
    </location>
</feature>